<keyword id="KW-1003">Cell membrane</keyword>
<keyword id="KW-0140">cGMP</keyword>
<keyword id="KW-0378">Hydrolase</keyword>
<keyword id="KW-0449">Lipoprotein</keyword>
<keyword id="KW-0472">Membrane</keyword>
<keyword id="KW-0479">Metal-binding</keyword>
<keyword id="KW-0488">Methylation</keyword>
<keyword id="KW-0636">Prenylation</keyword>
<keyword id="KW-1185">Reference proteome</keyword>
<keyword id="KW-0677">Repeat</keyword>
<feature type="chain" id="PRO_0000363692" description="cGMP-specific 3',5'-cyclic phosphodiesterase">
    <location>
        <begin position="1"/>
        <end position="1273"/>
    </location>
</feature>
<feature type="propeptide" id="PRO_0000363693" description="Removed in mature form" evidence="2">
    <location>
        <begin position="1274"/>
        <end position="1276"/>
    </location>
</feature>
<feature type="domain" description="GAF 1" evidence="3">
    <location>
        <begin position="290"/>
        <end position="442"/>
    </location>
</feature>
<feature type="domain" description="GAF 2" evidence="3">
    <location>
        <begin position="474"/>
        <end position="658"/>
    </location>
</feature>
<feature type="domain" description="PDEase" evidence="4">
    <location>
        <begin position="688"/>
        <end position="1119"/>
    </location>
</feature>
<feature type="region of interest" description="Disordered" evidence="5">
    <location>
        <begin position="1"/>
        <end position="76"/>
    </location>
</feature>
<feature type="region of interest" description="Disordered" evidence="5">
    <location>
        <begin position="91"/>
        <end position="185"/>
    </location>
</feature>
<feature type="region of interest" description="Disordered" evidence="5">
    <location>
        <begin position="241"/>
        <end position="260"/>
    </location>
</feature>
<feature type="region of interest" description="Disordered" evidence="5">
    <location>
        <begin position="1162"/>
        <end position="1193"/>
    </location>
</feature>
<feature type="region of interest" description="Disordered" evidence="5">
    <location>
        <begin position="1205"/>
        <end position="1276"/>
    </location>
</feature>
<feature type="compositionally biased region" description="Low complexity" evidence="5">
    <location>
        <begin position="12"/>
        <end position="47"/>
    </location>
</feature>
<feature type="compositionally biased region" description="Low complexity" evidence="5">
    <location>
        <begin position="57"/>
        <end position="76"/>
    </location>
</feature>
<feature type="compositionally biased region" description="Pro residues" evidence="5">
    <location>
        <begin position="109"/>
        <end position="124"/>
    </location>
</feature>
<feature type="compositionally biased region" description="Basic and acidic residues" evidence="5">
    <location>
        <begin position="129"/>
        <end position="140"/>
    </location>
</feature>
<feature type="compositionally biased region" description="Polar residues" evidence="5">
    <location>
        <begin position="147"/>
        <end position="166"/>
    </location>
</feature>
<feature type="compositionally biased region" description="Low complexity" evidence="5">
    <location>
        <begin position="167"/>
        <end position="180"/>
    </location>
</feature>
<feature type="compositionally biased region" description="Low complexity" evidence="5">
    <location>
        <begin position="249"/>
        <end position="260"/>
    </location>
</feature>
<feature type="compositionally biased region" description="Basic and acidic residues" evidence="5">
    <location>
        <begin position="1171"/>
        <end position="1180"/>
    </location>
</feature>
<feature type="compositionally biased region" description="Basic and acidic residues" evidence="5">
    <location>
        <begin position="1221"/>
        <end position="1233"/>
    </location>
</feature>
<feature type="compositionally biased region" description="Low complexity" evidence="5">
    <location>
        <begin position="1248"/>
        <end position="1263"/>
    </location>
</feature>
<feature type="compositionally biased region" description="Basic residues" evidence="5">
    <location>
        <begin position="1266"/>
        <end position="1276"/>
    </location>
</feature>
<feature type="active site" description="Proton donor" evidence="1">
    <location>
        <position position="764"/>
    </location>
</feature>
<feature type="binding site" evidence="1">
    <location>
        <position position="768"/>
    </location>
    <ligand>
        <name>a divalent metal cation</name>
        <dbReference type="ChEBI" id="CHEBI:60240"/>
        <label>1</label>
    </ligand>
</feature>
<feature type="binding site" evidence="1">
    <location>
        <position position="804"/>
    </location>
    <ligand>
        <name>a divalent metal cation</name>
        <dbReference type="ChEBI" id="CHEBI:60240"/>
        <label>1</label>
    </ligand>
</feature>
<feature type="binding site" evidence="1">
    <location>
        <position position="805"/>
    </location>
    <ligand>
        <name>a divalent metal cation</name>
        <dbReference type="ChEBI" id="CHEBI:60240"/>
        <label>1</label>
    </ligand>
</feature>
<feature type="binding site" evidence="1">
    <location>
        <position position="805"/>
    </location>
    <ligand>
        <name>a divalent metal cation</name>
        <dbReference type="ChEBI" id="CHEBI:60240"/>
        <label>2</label>
    </ligand>
</feature>
<feature type="binding site" evidence="1">
    <location>
        <position position="1023"/>
    </location>
    <ligand>
        <name>a divalent metal cation</name>
        <dbReference type="ChEBI" id="CHEBI:60240"/>
        <label>1</label>
    </ligand>
</feature>
<feature type="modified residue" description="Cysteine methyl ester" evidence="2">
    <location>
        <position position="1273"/>
    </location>
</feature>
<feature type="lipid moiety-binding region" description="S-farnesyl cysteine" evidence="2">
    <location>
        <position position="1273"/>
    </location>
</feature>
<organism>
    <name type="scientific">Drosophila persimilis</name>
    <name type="common">Fruit fly</name>
    <dbReference type="NCBI Taxonomy" id="7234"/>
    <lineage>
        <taxon>Eukaryota</taxon>
        <taxon>Metazoa</taxon>
        <taxon>Ecdysozoa</taxon>
        <taxon>Arthropoda</taxon>
        <taxon>Hexapoda</taxon>
        <taxon>Insecta</taxon>
        <taxon>Pterygota</taxon>
        <taxon>Neoptera</taxon>
        <taxon>Endopterygota</taxon>
        <taxon>Diptera</taxon>
        <taxon>Brachycera</taxon>
        <taxon>Muscomorpha</taxon>
        <taxon>Ephydroidea</taxon>
        <taxon>Drosophilidae</taxon>
        <taxon>Drosophila</taxon>
        <taxon>Sophophora</taxon>
    </lineage>
</organism>
<accession>B4G4E5</accession>
<sequence length="1276" mass="141612">MHELGTRQRPLSSSSSSSSSSNMTDVSAAAGGATAPAETAATSSSASKPLTNGANKTSTAMAAPTTTPTTAATAAGAAEAGAIASVAGISNQVKLEHHHRQSNNNRPVAPYPPVPAAKPKPTPTPTAESKFKSTSREVDVALRPTPARSSTISPGVSIHTQTIQQESSSAKPGMSSSSSSAQQDVDEVARLFEEKPEAFEKWLTERAPPEALSRLQEFIESRKPLKRPSVTSDLFQQWMSASPTVQQKSPRSLSNSSASSTLPECRRHLMDLDEGELFMELIRDVANELDIDVLCHKILVNVGLLTHADRGSLFLAKGTPHNKYLVAKLFDVTQKTALKDAVTRASAEEIIIPFGIGIAGMVAQTKQMINIKEAYKDARFNCEIDLKTGYKTNAILCMPICNYEGDIIGVAQIINKTNGCMEFDEHDVEIFRRYLTFCGIGIQNAQLFEMSVQEYRRNQILLNLARSIFEEQNNLECLVTKIMTEARELLNCERCSVFLVDLDCCEASHLEKIIEKPNQPEQRPTRAIMPGDSFDEKKMRNRFTVLFELGGEYQAASVSRPSKTELSTSTLAQIAQFVATTGQTVNICDVHEWVRDHNQIRAESEIDSTQAILCMPIVNAQKIVIGVAQLINKANGVPFTESDASIFEAFAIFCGLGIHNTQMYENACKLMAKQKVALECLSYHATASQDQTEKLTQDAIAEAESYNLYSFTFTDFELVDDDTCRAVLRMFLQCNLVSQFQIPYDVLCRWVLSVRKNYRPVKYHNWRHALNVAQTMFAMLKTGKMERFMTDLEILGLLVACLCHDLDHRGTNNAFQTKTESPLAILYTTSTMEHHHFDQCVMILNSEGNNIFQPRTTRTFLLLARRFLRFDLLPFRAFTRALRPLVRPLLELDVLELPDPSRIFLLTVYLRLVTRTIFLPPPEDEEEEDEVEDSVVLVVASVVVVVAVAASVVLKAELDVEALSPEDYRSVMKTVESAILSTDLAMYFKKRNAFLELVENGEFDWQGEEKKDLLCGMMMTACDVSAIAKPWEVQHKVAKLVADEFFDQGDLEKLQLNTQPVAMMDRERKDELPKMQVGFIDVICLPLYRVLCDTFPWITPLYEGTLENRRNWQDLAEKVEMGLTWIDHDTIDKPVEEFAGCADEEIKDIEFTVTTLNCNQQAQHGAGAGGDDSHTPEHQRSGSRLSMKKTGALGKAVRSKLSKTLYNSMDGSKPKTSLKLLESHVSEDMDDKSPTSPSQPPHAGGSVGRMSASSSTSSAGTVVDKSKKRSKLCSLL</sequence>
<protein>
    <recommendedName>
        <fullName evidence="2">cGMP-specific 3',5'-cyclic phosphodiesterase</fullName>
        <ecNumber>3.1.4.35</ecNumber>
    </recommendedName>
</protein>
<proteinExistence type="inferred from homology"/>
<gene>
    <name evidence="2" type="primary">Pde6</name>
    <name type="ORF">GL24177</name>
</gene>
<comment type="function">
    <text evidence="2">Has a role regulating cGMP transport in Malpighian tubule principal cells.</text>
</comment>
<comment type="catalytic activity">
    <reaction evidence="2">
        <text>3',5'-cyclic GMP + H2O = GMP + H(+)</text>
        <dbReference type="Rhea" id="RHEA:16957"/>
        <dbReference type="ChEBI" id="CHEBI:15377"/>
        <dbReference type="ChEBI" id="CHEBI:15378"/>
        <dbReference type="ChEBI" id="CHEBI:57746"/>
        <dbReference type="ChEBI" id="CHEBI:58115"/>
        <dbReference type="EC" id="3.1.4.35"/>
    </reaction>
</comment>
<comment type="cofactor">
    <cofactor evidence="1">
        <name>a divalent metal cation</name>
        <dbReference type="ChEBI" id="CHEBI:60240"/>
    </cofactor>
    <text evidence="1">Binds 2 divalent metal cations per subunit. Site 1 may preferentially bind zinc ions, while site 2 has a preference for magnesium and/or manganese ions.</text>
</comment>
<comment type="subunit">
    <text evidence="2">Interacts with PrBP.</text>
</comment>
<comment type="subcellular location">
    <subcellularLocation>
        <location evidence="2">Cell membrane</location>
        <topology evidence="2">Lipid-anchor</topology>
        <orientation evidence="2">Cytoplasmic side</orientation>
    </subcellularLocation>
</comment>
<comment type="similarity">
    <text evidence="3">Belongs to the cyclic nucleotide phosphodiesterase family.</text>
</comment>
<reference evidence="6" key="1">
    <citation type="journal article" date="2007" name="Nature">
        <title>Evolution of genes and genomes on the Drosophila phylogeny.</title>
        <authorList>
            <consortium name="Drosophila 12 genomes consortium"/>
        </authorList>
    </citation>
    <scope>NUCLEOTIDE SEQUENCE [LARGE SCALE GENOMIC DNA]</scope>
    <source>
        <strain>MSH-3 / Tucson 14011-0111.49</strain>
    </source>
</reference>
<evidence type="ECO:0000250" key="1"/>
<evidence type="ECO:0000250" key="2">
    <source>
        <dbReference type="UniProtKB" id="Q9VFI9"/>
    </source>
</evidence>
<evidence type="ECO:0000255" key="3"/>
<evidence type="ECO:0000255" key="4">
    <source>
        <dbReference type="PROSITE-ProRule" id="PRU01192"/>
    </source>
</evidence>
<evidence type="ECO:0000256" key="5">
    <source>
        <dbReference type="SAM" id="MobiDB-lite"/>
    </source>
</evidence>
<evidence type="ECO:0000312" key="6">
    <source>
        <dbReference type="EMBL" id="EDW24493.1"/>
    </source>
</evidence>
<name>PDE6_DROPE</name>
<dbReference type="EC" id="3.1.4.35"/>
<dbReference type="EMBL" id="CH479179">
    <property type="protein sequence ID" value="EDW24493.1"/>
    <property type="molecule type" value="Genomic_DNA"/>
</dbReference>
<dbReference type="RefSeq" id="XP_002013507.1">
    <property type="nucleotide sequence ID" value="XM_002013471.1"/>
</dbReference>
<dbReference type="SMR" id="B4G4E5"/>
<dbReference type="STRING" id="7234.B4G4E5"/>
<dbReference type="EnsemblMetazoa" id="FBtr0189792">
    <property type="protein sequence ID" value="FBpp0188284"/>
    <property type="gene ID" value="FBgn0161767"/>
</dbReference>
<dbReference type="eggNOG" id="KOG3689">
    <property type="taxonomic scope" value="Eukaryota"/>
</dbReference>
<dbReference type="HOGENOM" id="CLU_006980_0_2_1"/>
<dbReference type="OMA" id="FHIPYEV"/>
<dbReference type="OrthoDB" id="74705at2759"/>
<dbReference type="PhylomeDB" id="B4G4E5"/>
<dbReference type="ChiTaRS" id="Pde6">
    <property type="organism name" value="fly"/>
</dbReference>
<dbReference type="Proteomes" id="UP000008744">
    <property type="component" value="Unassembled WGS sequence"/>
</dbReference>
<dbReference type="GO" id="GO:0016020">
    <property type="term" value="C:membrane"/>
    <property type="evidence" value="ECO:0000250"/>
    <property type="project" value="UniProtKB"/>
</dbReference>
<dbReference type="GO" id="GO:0005886">
    <property type="term" value="C:plasma membrane"/>
    <property type="evidence" value="ECO:0007669"/>
    <property type="project" value="UniProtKB-SubCell"/>
</dbReference>
<dbReference type="GO" id="GO:0047555">
    <property type="term" value="F:3',5'-cyclic-GMP phosphodiesterase activity"/>
    <property type="evidence" value="ECO:0000250"/>
    <property type="project" value="UniProtKB"/>
</dbReference>
<dbReference type="GO" id="GO:0046872">
    <property type="term" value="F:metal ion binding"/>
    <property type="evidence" value="ECO:0007669"/>
    <property type="project" value="UniProtKB-KW"/>
</dbReference>
<dbReference type="GO" id="GO:0046068">
    <property type="term" value="P:cGMP metabolic process"/>
    <property type="evidence" value="ECO:0000250"/>
    <property type="project" value="UniProtKB"/>
</dbReference>
<dbReference type="GO" id="GO:0007165">
    <property type="term" value="P:signal transduction"/>
    <property type="evidence" value="ECO:0007669"/>
    <property type="project" value="InterPro"/>
</dbReference>
<dbReference type="CDD" id="cd00077">
    <property type="entry name" value="HDc"/>
    <property type="match status" value="1"/>
</dbReference>
<dbReference type="FunFam" id="1.10.1300.10:FF:000040">
    <property type="entry name" value="cGMP-specific 3',5'-cyclic phosphodiesterase"/>
    <property type="match status" value="1"/>
</dbReference>
<dbReference type="FunFam" id="3.30.450.40:FF:000031">
    <property type="entry name" value="Phosphodiesterase"/>
    <property type="match status" value="1"/>
</dbReference>
<dbReference type="Gene3D" id="3.30.450.40">
    <property type="match status" value="2"/>
</dbReference>
<dbReference type="Gene3D" id="1.10.1300.10">
    <property type="entry name" value="3'5'-cyclic nucleotide phosphodiesterase, catalytic domain"/>
    <property type="match status" value="2"/>
</dbReference>
<dbReference type="InterPro" id="IPR003018">
    <property type="entry name" value="GAF"/>
</dbReference>
<dbReference type="InterPro" id="IPR029016">
    <property type="entry name" value="GAF-like_dom_sf"/>
</dbReference>
<dbReference type="InterPro" id="IPR003607">
    <property type="entry name" value="HD/PDEase_dom"/>
</dbReference>
<dbReference type="InterPro" id="IPR023088">
    <property type="entry name" value="PDEase"/>
</dbReference>
<dbReference type="InterPro" id="IPR002073">
    <property type="entry name" value="PDEase_catalytic_dom"/>
</dbReference>
<dbReference type="InterPro" id="IPR036971">
    <property type="entry name" value="PDEase_catalytic_dom_sf"/>
</dbReference>
<dbReference type="InterPro" id="IPR023174">
    <property type="entry name" value="PDEase_CS"/>
</dbReference>
<dbReference type="PANTHER" id="PTHR11347">
    <property type="entry name" value="CYCLIC NUCLEOTIDE PHOSPHODIESTERASE"/>
    <property type="match status" value="1"/>
</dbReference>
<dbReference type="Pfam" id="PF01590">
    <property type="entry name" value="GAF"/>
    <property type="match status" value="2"/>
</dbReference>
<dbReference type="Pfam" id="PF00233">
    <property type="entry name" value="PDEase_I"/>
    <property type="match status" value="2"/>
</dbReference>
<dbReference type="PRINTS" id="PR00387">
    <property type="entry name" value="PDIESTERASE1"/>
</dbReference>
<dbReference type="SMART" id="SM00065">
    <property type="entry name" value="GAF"/>
    <property type="match status" value="2"/>
</dbReference>
<dbReference type="SMART" id="SM00471">
    <property type="entry name" value="HDc"/>
    <property type="match status" value="1"/>
</dbReference>
<dbReference type="SUPFAM" id="SSF55781">
    <property type="entry name" value="GAF domain-like"/>
    <property type="match status" value="2"/>
</dbReference>
<dbReference type="SUPFAM" id="SSF109604">
    <property type="entry name" value="HD-domain/PDEase-like"/>
    <property type="match status" value="2"/>
</dbReference>
<dbReference type="PROSITE" id="PS00126">
    <property type="entry name" value="PDEASE_I_1"/>
    <property type="match status" value="1"/>
</dbReference>
<dbReference type="PROSITE" id="PS51845">
    <property type="entry name" value="PDEASE_I_2"/>
    <property type="match status" value="1"/>
</dbReference>